<gene>
    <name type="primary">WEE2</name>
    <name type="synonym">WEE1B</name>
    <name type="ORF">PANDA_010640</name>
</gene>
<reference key="1">
    <citation type="journal article" date="2010" name="Nature">
        <title>The sequence and de novo assembly of the giant panda genome.</title>
        <authorList>
            <person name="Li R."/>
            <person name="Fan W."/>
            <person name="Tian G."/>
            <person name="Zhu H."/>
            <person name="He L."/>
            <person name="Cai J."/>
            <person name="Huang Q."/>
            <person name="Cai Q."/>
            <person name="Li B."/>
            <person name="Bai Y."/>
            <person name="Zhang Z."/>
            <person name="Zhang Y."/>
            <person name="Wang W."/>
            <person name="Li J."/>
            <person name="Wei F."/>
            <person name="Li H."/>
            <person name="Jian M."/>
            <person name="Li J."/>
            <person name="Zhang Z."/>
            <person name="Nielsen R."/>
            <person name="Li D."/>
            <person name="Gu W."/>
            <person name="Yang Z."/>
            <person name="Xuan Z."/>
            <person name="Ryder O.A."/>
            <person name="Leung F.C."/>
            <person name="Zhou Y."/>
            <person name="Cao J."/>
            <person name="Sun X."/>
            <person name="Fu Y."/>
            <person name="Fang X."/>
            <person name="Guo X."/>
            <person name="Wang B."/>
            <person name="Hou R."/>
            <person name="Shen F."/>
            <person name="Mu B."/>
            <person name="Ni P."/>
            <person name="Lin R."/>
            <person name="Qian W."/>
            <person name="Wang G."/>
            <person name="Yu C."/>
            <person name="Nie W."/>
            <person name="Wang J."/>
            <person name="Wu Z."/>
            <person name="Liang H."/>
            <person name="Min J."/>
            <person name="Wu Q."/>
            <person name="Cheng S."/>
            <person name="Ruan J."/>
            <person name="Wang M."/>
            <person name="Shi Z."/>
            <person name="Wen M."/>
            <person name="Liu B."/>
            <person name="Ren X."/>
            <person name="Zheng H."/>
            <person name="Dong D."/>
            <person name="Cook K."/>
            <person name="Shan G."/>
            <person name="Zhang H."/>
            <person name="Kosiol C."/>
            <person name="Xie X."/>
            <person name="Lu Z."/>
            <person name="Zheng H."/>
            <person name="Li Y."/>
            <person name="Steiner C.C."/>
            <person name="Lam T.T."/>
            <person name="Lin S."/>
            <person name="Zhang Q."/>
            <person name="Li G."/>
            <person name="Tian J."/>
            <person name="Gong T."/>
            <person name="Liu H."/>
            <person name="Zhang D."/>
            <person name="Fang L."/>
            <person name="Ye C."/>
            <person name="Zhang J."/>
            <person name="Hu W."/>
            <person name="Xu A."/>
            <person name="Ren Y."/>
            <person name="Zhang G."/>
            <person name="Bruford M.W."/>
            <person name="Li Q."/>
            <person name="Ma L."/>
            <person name="Guo Y."/>
            <person name="An N."/>
            <person name="Hu Y."/>
            <person name="Zheng Y."/>
            <person name="Shi Y."/>
            <person name="Li Z."/>
            <person name="Liu Q."/>
            <person name="Chen Y."/>
            <person name="Zhao J."/>
            <person name="Qu N."/>
            <person name="Zhao S."/>
            <person name="Tian F."/>
            <person name="Wang X."/>
            <person name="Wang H."/>
            <person name="Xu L."/>
            <person name="Liu X."/>
            <person name="Vinar T."/>
            <person name="Wang Y."/>
            <person name="Lam T.W."/>
            <person name="Yiu S.M."/>
            <person name="Liu S."/>
            <person name="Zhang H."/>
            <person name="Li D."/>
            <person name="Huang Y."/>
            <person name="Wang X."/>
            <person name="Yang G."/>
            <person name="Jiang Z."/>
            <person name="Wang J."/>
            <person name="Qin N."/>
            <person name="Li L."/>
            <person name="Li J."/>
            <person name="Bolund L."/>
            <person name="Kristiansen K."/>
            <person name="Wong G.K."/>
            <person name="Olson M."/>
            <person name="Zhang X."/>
            <person name="Li S."/>
            <person name="Yang H."/>
            <person name="Wang J."/>
            <person name="Wang J."/>
        </authorList>
    </citation>
    <scope>NUCLEOTIDE SEQUENCE [LARGE SCALE GENOMIC DNA]</scope>
</reference>
<sequence>MDDSSINKELKQKLNFSYCEEESESEGQEAWETRDAHSQIPDRAEGQESEAKFTPPGPPLSSVHEVGTFQEKTKKSPEQVLMTPVSGFRNYPETPAQPDSRSKLLDCESPFTPKGLLSQSVISSTEKIPSRGSKHLRFTPVPFVDEMTSSALVNINPFTPESYRKQFLKSNGKRKTRGDFEEAGPGEGNVEQGLPAKRCVLQETNMASRYEKEFLEVEKIGVGEFGTVYKCIKRLDGCVYAIKRSTKPFAGLSNENLALHEVYAHAVLGHHPHVVRYYSAWAEDDHMIIQNEYCNGGSLQTAISENTKSGNHFQEPKLKDILLQISLGLKYIHSSGMVHLDIKPSNIFICHKMQSDSPVVPEEIENEADWFLSANVMYKIGDLGHVTSISKPKVEEGDSRFLANEILQEDYQHLPKADIFALGLTIAVAAGAESLPTNGAAWHHIREGKLPDIPQKLSEEFYNLLKNMIHPDPRERPSAAALARSRVLRPSLGKAEELQQQLNLEKFKTATLERELREAQQAWFSQEERGDAGVSGTPTGSRSTKRLVGGKSAKSSSFTWGKSSP</sequence>
<name>WEE2_AILME</name>
<comment type="function">
    <text evidence="1">Oocyte-specific protein tyrosine kinase that phosphorylates and inhibits CDK1 and acts as a key regulator of meiosis during both prophase I and metaphase II. Required to maintain meiotic arrest in oocytes during the germinal vesicle (GV) stage, a long period of quiescence at dictyate prophase I, by phosphorylating CDK1 at 'Tyr-15', leading to inhibit CDK1 activity and prevent meiotic reentry. Also required for metaphase II exit during egg activation by phosphorylating CDK1 at 'Tyr-15', to ensure exit from meiosis in oocytes and promote pronuclear formation (By similarity).</text>
</comment>
<comment type="catalytic activity">
    <reaction evidence="5">
        <text>L-tyrosyl-[protein] + ATP = O-phospho-L-tyrosyl-[protein] + ADP + H(+)</text>
        <dbReference type="Rhea" id="RHEA:10596"/>
        <dbReference type="Rhea" id="RHEA-COMP:10136"/>
        <dbReference type="Rhea" id="RHEA-COMP:20101"/>
        <dbReference type="ChEBI" id="CHEBI:15378"/>
        <dbReference type="ChEBI" id="CHEBI:30616"/>
        <dbReference type="ChEBI" id="CHEBI:46858"/>
        <dbReference type="ChEBI" id="CHEBI:61978"/>
        <dbReference type="ChEBI" id="CHEBI:456216"/>
        <dbReference type="EC" id="2.7.10.2"/>
    </reaction>
</comment>
<comment type="subcellular location">
    <subcellularLocation>
        <location evidence="1">Nucleus</location>
    </subcellularLocation>
</comment>
<comment type="PTM">
    <text evidence="1">Phosphorylation leads to increase its activity.</text>
</comment>
<comment type="similarity">
    <text evidence="4">Belongs to the protein kinase superfamily. Ser/Thr protein kinase family. WEE1 subfamily.</text>
</comment>
<evidence type="ECO:0000250" key="1"/>
<evidence type="ECO:0000250" key="2">
    <source>
        <dbReference type="UniProtKB" id="A4PES0"/>
    </source>
</evidence>
<evidence type="ECO:0000255" key="3"/>
<evidence type="ECO:0000255" key="4">
    <source>
        <dbReference type="PROSITE-ProRule" id="PRU00159"/>
    </source>
</evidence>
<evidence type="ECO:0000255" key="5">
    <source>
        <dbReference type="PROSITE-ProRule" id="PRU10027"/>
    </source>
</evidence>
<evidence type="ECO:0000256" key="6">
    <source>
        <dbReference type="SAM" id="MobiDB-lite"/>
    </source>
</evidence>
<proteinExistence type="inferred from homology"/>
<organism>
    <name type="scientific">Ailuropoda melanoleuca</name>
    <name type="common">Giant panda</name>
    <dbReference type="NCBI Taxonomy" id="9646"/>
    <lineage>
        <taxon>Eukaryota</taxon>
        <taxon>Metazoa</taxon>
        <taxon>Chordata</taxon>
        <taxon>Craniata</taxon>
        <taxon>Vertebrata</taxon>
        <taxon>Euteleostomi</taxon>
        <taxon>Mammalia</taxon>
        <taxon>Eutheria</taxon>
        <taxon>Laurasiatheria</taxon>
        <taxon>Carnivora</taxon>
        <taxon>Caniformia</taxon>
        <taxon>Ursidae</taxon>
        <taxon>Ailuropoda</taxon>
    </lineage>
</organism>
<keyword id="KW-0067">ATP-binding</keyword>
<keyword id="KW-0175">Coiled coil</keyword>
<keyword id="KW-0418">Kinase</keyword>
<keyword id="KW-0460">Magnesium</keyword>
<keyword id="KW-0469">Meiosis</keyword>
<keyword id="KW-0479">Metal-binding</keyword>
<keyword id="KW-0547">Nucleotide-binding</keyword>
<keyword id="KW-0539">Nucleus</keyword>
<keyword id="KW-0597">Phosphoprotein</keyword>
<keyword id="KW-1185">Reference proteome</keyword>
<keyword id="KW-0808">Transferase</keyword>
<keyword id="KW-0829">Tyrosine-protein kinase</keyword>
<dbReference type="EC" id="2.7.10.2"/>
<dbReference type="EMBL" id="GL192847">
    <property type="protein sequence ID" value="EFB29558.1"/>
    <property type="molecule type" value="Genomic_DNA"/>
</dbReference>
<dbReference type="RefSeq" id="XP_002921735.1">
    <property type="nucleotide sequence ID" value="XM_002921689.4"/>
</dbReference>
<dbReference type="SMR" id="D2HHP1"/>
<dbReference type="FunCoup" id="D2HHP1">
    <property type="interactions" value="35"/>
</dbReference>
<dbReference type="STRING" id="9646.ENSAMEP00000015995"/>
<dbReference type="GeneID" id="100468598"/>
<dbReference type="KEGG" id="aml:100468598"/>
<dbReference type="CTD" id="494551"/>
<dbReference type="eggNOG" id="KOG0601">
    <property type="taxonomic scope" value="Eukaryota"/>
</dbReference>
<dbReference type="HOGENOM" id="CLU_000288_25_1_1"/>
<dbReference type="InParanoid" id="D2HHP1"/>
<dbReference type="OMA" id="PLKDEMT"/>
<dbReference type="OrthoDB" id="5337378at2759"/>
<dbReference type="TreeFam" id="TF101088"/>
<dbReference type="Proteomes" id="UP000008912">
    <property type="component" value="Unassembled WGS sequence"/>
</dbReference>
<dbReference type="GO" id="GO:0005737">
    <property type="term" value="C:cytoplasm"/>
    <property type="evidence" value="ECO:0000250"/>
    <property type="project" value="UniProtKB"/>
</dbReference>
<dbReference type="GO" id="GO:0005634">
    <property type="term" value="C:nucleus"/>
    <property type="evidence" value="ECO:0000250"/>
    <property type="project" value="UniProtKB"/>
</dbReference>
<dbReference type="GO" id="GO:0005524">
    <property type="term" value="F:ATP binding"/>
    <property type="evidence" value="ECO:0007669"/>
    <property type="project" value="UniProtKB-KW"/>
</dbReference>
<dbReference type="GO" id="GO:0000287">
    <property type="term" value="F:magnesium ion binding"/>
    <property type="evidence" value="ECO:0007669"/>
    <property type="project" value="InterPro"/>
</dbReference>
<dbReference type="GO" id="GO:0004715">
    <property type="term" value="F:non-membrane spanning protein tyrosine kinase activity"/>
    <property type="evidence" value="ECO:0007669"/>
    <property type="project" value="UniProtKB-EC"/>
</dbReference>
<dbReference type="GO" id="GO:0007143">
    <property type="term" value="P:female meiotic nuclear division"/>
    <property type="evidence" value="ECO:0000250"/>
    <property type="project" value="UniProtKB"/>
</dbReference>
<dbReference type="GO" id="GO:0035038">
    <property type="term" value="P:female pronucleus assembly"/>
    <property type="evidence" value="ECO:0000250"/>
    <property type="project" value="UniProtKB"/>
</dbReference>
<dbReference type="GO" id="GO:0000278">
    <property type="term" value="P:mitotic cell cycle"/>
    <property type="evidence" value="ECO:0007669"/>
    <property type="project" value="InterPro"/>
</dbReference>
<dbReference type="GO" id="GO:1900194">
    <property type="term" value="P:negative regulation of oocyte maturation"/>
    <property type="evidence" value="ECO:0000250"/>
    <property type="project" value="UniProtKB"/>
</dbReference>
<dbReference type="GO" id="GO:0042327">
    <property type="term" value="P:positive regulation of phosphorylation"/>
    <property type="evidence" value="ECO:0000250"/>
    <property type="project" value="UniProtKB"/>
</dbReference>
<dbReference type="GO" id="GO:0080154">
    <property type="term" value="P:regulation of fertilization"/>
    <property type="evidence" value="ECO:0000250"/>
    <property type="project" value="UniProtKB"/>
</dbReference>
<dbReference type="GO" id="GO:0060631">
    <property type="term" value="P:regulation of meiosis I"/>
    <property type="evidence" value="ECO:0000250"/>
    <property type="project" value="UniProtKB"/>
</dbReference>
<dbReference type="CDD" id="cd14139">
    <property type="entry name" value="PTKc_Wee1b"/>
    <property type="match status" value="1"/>
</dbReference>
<dbReference type="FunFam" id="3.30.200.20:FF:000115">
    <property type="entry name" value="Wee1-like kinase 2"/>
    <property type="match status" value="1"/>
</dbReference>
<dbReference type="FunFam" id="1.10.510.10:FF:000217">
    <property type="entry name" value="Wee1-like protein kinase"/>
    <property type="match status" value="1"/>
</dbReference>
<dbReference type="Gene3D" id="3.30.200.20">
    <property type="entry name" value="Phosphorylase Kinase, domain 1"/>
    <property type="match status" value="1"/>
</dbReference>
<dbReference type="Gene3D" id="1.10.510.10">
    <property type="entry name" value="Transferase(Phosphotransferase) domain 1"/>
    <property type="match status" value="1"/>
</dbReference>
<dbReference type="InterPro" id="IPR050339">
    <property type="entry name" value="CC_SR_Kinase"/>
</dbReference>
<dbReference type="InterPro" id="IPR011009">
    <property type="entry name" value="Kinase-like_dom_sf"/>
</dbReference>
<dbReference type="InterPro" id="IPR000719">
    <property type="entry name" value="Prot_kinase_dom"/>
</dbReference>
<dbReference type="InterPro" id="IPR017441">
    <property type="entry name" value="Protein_kinase_ATP_BS"/>
</dbReference>
<dbReference type="InterPro" id="IPR008271">
    <property type="entry name" value="Ser/Thr_kinase_AS"/>
</dbReference>
<dbReference type="InterPro" id="IPR017164">
    <property type="entry name" value="Wee1-like_protein_kinase"/>
</dbReference>
<dbReference type="PANTHER" id="PTHR11042">
    <property type="entry name" value="EUKARYOTIC TRANSLATION INITIATION FACTOR 2-ALPHA KINASE EIF2-ALPHA KINASE -RELATED"/>
    <property type="match status" value="1"/>
</dbReference>
<dbReference type="PANTHER" id="PTHR11042:SF75">
    <property type="entry name" value="WEE1-LIKE PROTEIN KINASE 2"/>
    <property type="match status" value="1"/>
</dbReference>
<dbReference type="Pfam" id="PF00069">
    <property type="entry name" value="Pkinase"/>
    <property type="match status" value="1"/>
</dbReference>
<dbReference type="PIRSF" id="PIRSF037281">
    <property type="entry name" value="Wee1-like_protein_kinase"/>
    <property type="match status" value="1"/>
</dbReference>
<dbReference type="SMART" id="SM00220">
    <property type="entry name" value="S_TKc"/>
    <property type="match status" value="1"/>
</dbReference>
<dbReference type="SUPFAM" id="SSF56112">
    <property type="entry name" value="Protein kinase-like (PK-like)"/>
    <property type="match status" value="1"/>
</dbReference>
<dbReference type="PROSITE" id="PS00107">
    <property type="entry name" value="PROTEIN_KINASE_ATP"/>
    <property type="match status" value="1"/>
</dbReference>
<dbReference type="PROSITE" id="PS50011">
    <property type="entry name" value="PROTEIN_KINASE_DOM"/>
    <property type="match status" value="1"/>
</dbReference>
<dbReference type="PROSITE" id="PS00108">
    <property type="entry name" value="PROTEIN_KINASE_ST"/>
    <property type="match status" value="1"/>
</dbReference>
<accession>D2HHP1</accession>
<feature type="chain" id="PRO_0000409524" description="Wee1-like protein kinase 2">
    <location>
        <begin position="1"/>
        <end position="565"/>
    </location>
</feature>
<feature type="domain" description="Protein kinase" evidence="4">
    <location>
        <begin position="214"/>
        <end position="492"/>
    </location>
</feature>
<feature type="region of interest" description="Disordered" evidence="6">
    <location>
        <begin position="18"/>
        <end position="78"/>
    </location>
</feature>
<feature type="region of interest" description="Disordered" evidence="6">
    <location>
        <begin position="169"/>
        <end position="191"/>
    </location>
</feature>
<feature type="region of interest" description="Disordered" evidence="6">
    <location>
        <begin position="521"/>
        <end position="565"/>
    </location>
</feature>
<feature type="coiled-coil region" evidence="3">
    <location>
        <begin position="495"/>
        <end position="521"/>
    </location>
</feature>
<feature type="short sequence motif" description="Nuclear localization signal" evidence="1">
    <location>
        <begin position="173"/>
        <end position="175"/>
    </location>
</feature>
<feature type="short sequence motif" description="Nuclear export signal" evidence="1">
    <location>
        <begin position="317"/>
        <end position="331"/>
    </location>
</feature>
<feature type="compositionally biased region" description="Acidic residues" evidence="6">
    <location>
        <begin position="19"/>
        <end position="29"/>
    </location>
</feature>
<feature type="compositionally biased region" description="Basic and acidic residues" evidence="6">
    <location>
        <begin position="31"/>
        <end position="51"/>
    </location>
</feature>
<feature type="compositionally biased region" description="Polar residues" evidence="6">
    <location>
        <begin position="553"/>
        <end position="565"/>
    </location>
</feature>
<feature type="active site" description="Proton acceptor" evidence="4 5">
    <location>
        <position position="341"/>
    </location>
</feature>
<feature type="binding site" evidence="4">
    <location>
        <begin position="220"/>
        <end position="228"/>
    </location>
    <ligand>
        <name>ATP</name>
        <dbReference type="ChEBI" id="CHEBI:30616"/>
    </ligand>
</feature>
<feature type="binding site" evidence="4">
    <location>
        <position position="243"/>
    </location>
    <ligand>
        <name>ATP</name>
        <dbReference type="ChEBI" id="CHEBI:30616"/>
    </ligand>
</feature>
<feature type="binding site" evidence="1">
    <location>
        <position position="346"/>
    </location>
    <ligand>
        <name>Mg(2+)</name>
        <dbReference type="ChEBI" id="CHEBI:18420"/>
    </ligand>
</feature>
<feature type="binding site" evidence="1">
    <location>
        <position position="382"/>
    </location>
    <ligand>
        <name>Mg(2+)</name>
        <dbReference type="ChEBI" id="CHEBI:18420"/>
    </ligand>
</feature>
<feature type="modified residue" description="Phosphoserine" evidence="2">
    <location>
        <position position="76"/>
    </location>
</feature>
<protein>
    <recommendedName>
        <fullName>Wee1-like protein kinase 2</fullName>
        <ecNumber>2.7.10.2</ecNumber>
    </recommendedName>
    <alternativeName>
        <fullName>Wee1-like protein kinase 1B</fullName>
    </alternativeName>
    <alternativeName>
        <fullName>Wee1B kinase</fullName>
    </alternativeName>
</protein>